<gene>
    <name evidence="1" type="primary">pstB2</name>
    <name type="ordered locus">EF_1756</name>
</gene>
<reference key="1">
    <citation type="journal article" date="2003" name="Science">
        <title>Role of mobile DNA in the evolution of vancomycin-resistant Enterococcus faecalis.</title>
        <authorList>
            <person name="Paulsen I.T."/>
            <person name="Banerjei L."/>
            <person name="Myers G.S.A."/>
            <person name="Nelson K.E."/>
            <person name="Seshadri R."/>
            <person name="Read T.D."/>
            <person name="Fouts D.E."/>
            <person name="Eisen J.A."/>
            <person name="Gill S.R."/>
            <person name="Heidelberg J.F."/>
            <person name="Tettelin H."/>
            <person name="Dodson R.J."/>
            <person name="Umayam L.A."/>
            <person name="Brinkac L.M."/>
            <person name="Beanan M.J."/>
            <person name="Daugherty S.C."/>
            <person name="DeBoy R.T."/>
            <person name="Durkin S.A."/>
            <person name="Kolonay J.F."/>
            <person name="Madupu R."/>
            <person name="Nelson W.C."/>
            <person name="Vamathevan J.J."/>
            <person name="Tran B."/>
            <person name="Upton J."/>
            <person name="Hansen T."/>
            <person name="Shetty J."/>
            <person name="Khouri H.M."/>
            <person name="Utterback T.R."/>
            <person name="Radune D."/>
            <person name="Ketchum K.A."/>
            <person name="Dougherty B.A."/>
            <person name="Fraser C.M."/>
        </authorList>
    </citation>
    <scope>NUCLEOTIDE SEQUENCE [LARGE SCALE GENOMIC DNA]</scope>
    <source>
        <strain>ATCC 700802 / V583</strain>
    </source>
</reference>
<feature type="chain" id="PRO_0000092816" description="Phosphate import ATP-binding protein PstB 2">
    <location>
        <begin position="1"/>
        <end position="269"/>
    </location>
</feature>
<feature type="domain" description="ABC transporter" evidence="1">
    <location>
        <begin position="23"/>
        <end position="264"/>
    </location>
</feature>
<feature type="binding site" evidence="1">
    <location>
        <begin position="55"/>
        <end position="62"/>
    </location>
    <ligand>
        <name>ATP</name>
        <dbReference type="ChEBI" id="CHEBI:30616"/>
    </ligand>
</feature>
<name>PSTB2_ENTFA</name>
<evidence type="ECO:0000255" key="1">
    <source>
        <dbReference type="HAMAP-Rule" id="MF_01702"/>
    </source>
</evidence>
<sequence>MKEYNLNDTHLLQLDSQKDPIALHTEDLHVFYGDNEAIKGVDLQFEKNKITALIGPSGCGKSTYLRSLNRMNDGIANSRVTGKIMYKDVDVNTKEVDVYEMRKRIGMVFQRPNPFSKSIYENITFALKQHGEKDKKKLDEIVETSLKQAALWDQVKDNLNKSALALSGGQQQRLCIARAIAMKPDILLLDEPASALDPISTGTVEETLVNLKDDYTIIIVTHNMQQAARISDYTAFFYMGKVIEYDHTRKIFTRPKIQATEDYVSGHFG</sequence>
<accession>Q834B3</accession>
<keyword id="KW-0067">ATP-binding</keyword>
<keyword id="KW-1003">Cell membrane</keyword>
<keyword id="KW-0472">Membrane</keyword>
<keyword id="KW-0547">Nucleotide-binding</keyword>
<keyword id="KW-0592">Phosphate transport</keyword>
<keyword id="KW-1185">Reference proteome</keyword>
<keyword id="KW-1278">Translocase</keyword>
<keyword id="KW-0813">Transport</keyword>
<organism>
    <name type="scientific">Enterococcus faecalis (strain ATCC 700802 / V583)</name>
    <dbReference type="NCBI Taxonomy" id="226185"/>
    <lineage>
        <taxon>Bacteria</taxon>
        <taxon>Bacillati</taxon>
        <taxon>Bacillota</taxon>
        <taxon>Bacilli</taxon>
        <taxon>Lactobacillales</taxon>
        <taxon>Enterococcaceae</taxon>
        <taxon>Enterococcus</taxon>
    </lineage>
</organism>
<protein>
    <recommendedName>
        <fullName evidence="1">Phosphate import ATP-binding protein PstB 2</fullName>
        <ecNumber evidence="1">7.3.2.1</ecNumber>
    </recommendedName>
    <alternativeName>
        <fullName evidence="1">ABC phosphate transporter 2</fullName>
    </alternativeName>
    <alternativeName>
        <fullName evidence="1">Phosphate-transporting ATPase 2</fullName>
    </alternativeName>
</protein>
<proteinExistence type="inferred from homology"/>
<comment type="function">
    <text evidence="1">Part of the ABC transporter complex PstSACB involved in phosphate import. Responsible for energy coupling to the transport system.</text>
</comment>
<comment type="catalytic activity">
    <reaction evidence="1">
        <text>phosphate(out) + ATP + H2O = ADP + 2 phosphate(in) + H(+)</text>
        <dbReference type="Rhea" id="RHEA:24440"/>
        <dbReference type="ChEBI" id="CHEBI:15377"/>
        <dbReference type="ChEBI" id="CHEBI:15378"/>
        <dbReference type="ChEBI" id="CHEBI:30616"/>
        <dbReference type="ChEBI" id="CHEBI:43474"/>
        <dbReference type="ChEBI" id="CHEBI:456216"/>
        <dbReference type="EC" id="7.3.2.1"/>
    </reaction>
</comment>
<comment type="subunit">
    <text evidence="1">The complex is composed of two ATP-binding proteins (PstB), two transmembrane proteins (PstC and PstA) and a solute-binding protein (PstS).</text>
</comment>
<comment type="subcellular location">
    <subcellularLocation>
        <location evidence="1">Cell membrane</location>
        <topology evidence="1">Peripheral membrane protein</topology>
    </subcellularLocation>
</comment>
<comment type="similarity">
    <text evidence="1">Belongs to the ABC transporter superfamily. Phosphate importer (TC 3.A.1.7) family.</text>
</comment>
<dbReference type="EC" id="7.3.2.1" evidence="1"/>
<dbReference type="EMBL" id="AE016830">
    <property type="protein sequence ID" value="AAO81529.1"/>
    <property type="molecule type" value="Genomic_DNA"/>
</dbReference>
<dbReference type="RefSeq" id="NP_815459.1">
    <property type="nucleotide sequence ID" value="NC_004668.1"/>
</dbReference>
<dbReference type="SMR" id="Q834B3"/>
<dbReference type="STRING" id="226185.EF_1756"/>
<dbReference type="EnsemblBacteria" id="AAO81529">
    <property type="protein sequence ID" value="AAO81529"/>
    <property type="gene ID" value="EF_1756"/>
</dbReference>
<dbReference type="KEGG" id="efa:EF1756"/>
<dbReference type="PATRIC" id="fig|226185.45.peg.1759"/>
<dbReference type="eggNOG" id="COG1117">
    <property type="taxonomic scope" value="Bacteria"/>
</dbReference>
<dbReference type="HOGENOM" id="CLU_000604_1_22_9"/>
<dbReference type="Proteomes" id="UP000001415">
    <property type="component" value="Chromosome"/>
</dbReference>
<dbReference type="GO" id="GO:0005886">
    <property type="term" value="C:plasma membrane"/>
    <property type="evidence" value="ECO:0007669"/>
    <property type="project" value="UniProtKB-SubCell"/>
</dbReference>
<dbReference type="GO" id="GO:0005524">
    <property type="term" value="F:ATP binding"/>
    <property type="evidence" value="ECO:0007669"/>
    <property type="project" value="UniProtKB-KW"/>
</dbReference>
<dbReference type="GO" id="GO:0016887">
    <property type="term" value="F:ATP hydrolysis activity"/>
    <property type="evidence" value="ECO:0007669"/>
    <property type="project" value="InterPro"/>
</dbReference>
<dbReference type="GO" id="GO:0015415">
    <property type="term" value="F:ATPase-coupled phosphate ion transmembrane transporter activity"/>
    <property type="evidence" value="ECO:0007669"/>
    <property type="project" value="UniProtKB-EC"/>
</dbReference>
<dbReference type="GO" id="GO:0035435">
    <property type="term" value="P:phosphate ion transmembrane transport"/>
    <property type="evidence" value="ECO:0007669"/>
    <property type="project" value="InterPro"/>
</dbReference>
<dbReference type="CDD" id="cd03260">
    <property type="entry name" value="ABC_PstB_phosphate_transporter"/>
    <property type="match status" value="1"/>
</dbReference>
<dbReference type="Gene3D" id="3.40.50.300">
    <property type="entry name" value="P-loop containing nucleotide triphosphate hydrolases"/>
    <property type="match status" value="1"/>
</dbReference>
<dbReference type="InterPro" id="IPR003593">
    <property type="entry name" value="AAA+_ATPase"/>
</dbReference>
<dbReference type="InterPro" id="IPR003439">
    <property type="entry name" value="ABC_transporter-like_ATP-bd"/>
</dbReference>
<dbReference type="InterPro" id="IPR017871">
    <property type="entry name" value="ABC_transporter-like_CS"/>
</dbReference>
<dbReference type="InterPro" id="IPR027417">
    <property type="entry name" value="P-loop_NTPase"/>
</dbReference>
<dbReference type="InterPro" id="IPR005670">
    <property type="entry name" value="PstB-like"/>
</dbReference>
<dbReference type="NCBIfam" id="TIGR00972">
    <property type="entry name" value="3a0107s01c2"/>
    <property type="match status" value="1"/>
</dbReference>
<dbReference type="PANTHER" id="PTHR43423">
    <property type="entry name" value="ABC TRANSPORTER I FAMILY MEMBER 17"/>
    <property type="match status" value="1"/>
</dbReference>
<dbReference type="PANTHER" id="PTHR43423:SF10">
    <property type="entry name" value="PHOSPHATE IMPORT ATP-BINDING PROTEIN PSTB 2"/>
    <property type="match status" value="1"/>
</dbReference>
<dbReference type="Pfam" id="PF00005">
    <property type="entry name" value="ABC_tran"/>
    <property type="match status" value="1"/>
</dbReference>
<dbReference type="SMART" id="SM00382">
    <property type="entry name" value="AAA"/>
    <property type="match status" value="1"/>
</dbReference>
<dbReference type="SUPFAM" id="SSF52540">
    <property type="entry name" value="P-loop containing nucleoside triphosphate hydrolases"/>
    <property type="match status" value="1"/>
</dbReference>
<dbReference type="PROSITE" id="PS00211">
    <property type="entry name" value="ABC_TRANSPORTER_1"/>
    <property type="match status" value="1"/>
</dbReference>
<dbReference type="PROSITE" id="PS50893">
    <property type="entry name" value="ABC_TRANSPORTER_2"/>
    <property type="match status" value="1"/>
</dbReference>
<dbReference type="PROSITE" id="PS51238">
    <property type="entry name" value="PSTB"/>
    <property type="match status" value="1"/>
</dbReference>